<comment type="function">
    <text evidence="1">Component of the NuA4 histone acetyltransferase (HAT) complex which is involved in transcriptional activation of select genes principally by acetylation of nucleosomal histones H4 and H2A. This modification may both alter nucleosome - DNA interactions and promote interaction of the modified histones with other proteins which positively regulate transcription. This complex may be required for the activation of transcriptional programs associated with oncogene and proto-oncogene mediated growth induction, tumor suppressor mediated growth arrest and replicative senescence, apoptosis, and DNA repair. NuA4 may also play a direct role in DNA repair when directly recruited to sites of DNA damage. Component of a SWR1-like complex that specifically mediates the removal of histone H2A.Z/H2AZ1 from the nucleosome (By similarity).</text>
</comment>
<comment type="subunit">
    <text evidence="1">Interacts with H3K4me3 and to a lesser extent with H3K4me2 (By similarity). Component of the NuA4 histone acetyltransferase complex which contains the catalytic subunit KAT5/TIP60 and the subunits EP400, TRRAP/PAF400, BRD8/SMAP, EPC1, DMAP1/DNMAP1, RUVBL1/TIP49, RUVBL2, ING3, actin, ACTL6A/BAF53A, MORF4L1/MRG15, MORF4L2/MRGX, MRGBP, YEATS4/GAS41, VPS72/YL1 and MEAF6. The NuA4 complex interacts with MYC. HTATTIP/TIP60, EPC1, and ING3 together constitute a minimal HAT complex termed Piccolo NuA4. Component of a SWR1-like complex (By similarity).</text>
</comment>
<comment type="subcellular location">
    <subcellularLocation>
        <location evidence="1">Nucleus</location>
    </subcellularLocation>
</comment>
<comment type="domain">
    <text evidence="1">The PHD-type zinc finger mediates the binding to H3K4me3.</text>
</comment>
<comment type="similarity">
    <text evidence="7">Belongs to the ING family.</text>
</comment>
<organism>
    <name type="scientific">Rattus norvegicus</name>
    <name type="common">Rat</name>
    <dbReference type="NCBI Taxonomy" id="10116"/>
    <lineage>
        <taxon>Eukaryota</taxon>
        <taxon>Metazoa</taxon>
        <taxon>Chordata</taxon>
        <taxon>Craniata</taxon>
        <taxon>Vertebrata</taxon>
        <taxon>Euteleostomi</taxon>
        <taxon>Mammalia</taxon>
        <taxon>Eutheria</taxon>
        <taxon>Euarchontoglires</taxon>
        <taxon>Glires</taxon>
        <taxon>Rodentia</taxon>
        <taxon>Myomorpha</taxon>
        <taxon>Muroidea</taxon>
        <taxon>Muridae</taxon>
        <taxon>Murinae</taxon>
        <taxon>Rattus</taxon>
    </lineage>
</organism>
<gene>
    <name type="primary">Ing3</name>
</gene>
<dbReference type="EMBL" id="CH473959">
    <property type="protein sequence ID" value="EDM15142.1"/>
    <property type="molecule type" value="Genomic_DNA"/>
</dbReference>
<dbReference type="EMBL" id="BC100082">
    <property type="protein sequence ID" value="AAI00083.1"/>
    <property type="molecule type" value="mRNA"/>
</dbReference>
<dbReference type="RefSeq" id="NP_001029279.1">
    <property type="nucleotide sequence ID" value="NM_001034107.2"/>
</dbReference>
<dbReference type="PDB" id="8COK">
    <property type="method" value="X-ray"/>
    <property type="resolution" value="2.91 A"/>
    <property type="chains" value="A/B=1-102"/>
</dbReference>
<dbReference type="PDBsum" id="8COK"/>
<dbReference type="BMRB" id="Q498T3"/>
<dbReference type="SMR" id="Q498T3"/>
<dbReference type="FunCoup" id="Q498T3">
    <property type="interactions" value="3255"/>
</dbReference>
<dbReference type="STRING" id="10116.ENSRNOP00000007476"/>
<dbReference type="iPTMnet" id="Q498T3"/>
<dbReference type="PhosphoSitePlus" id="Q498T3"/>
<dbReference type="PaxDb" id="10116-ENSRNOP00000007476"/>
<dbReference type="Ensembl" id="ENSRNOT00000007476.6">
    <property type="protein sequence ID" value="ENSRNOP00000007476.4"/>
    <property type="gene ID" value="ENSRNOG00000005496.6"/>
</dbReference>
<dbReference type="GeneID" id="312154"/>
<dbReference type="KEGG" id="rno:312154"/>
<dbReference type="UCSC" id="RGD:1310556">
    <property type="organism name" value="rat"/>
</dbReference>
<dbReference type="AGR" id="RGD:1310556"/>
<dbReference type="CTD" id="54556"/>
<dbReference type="RGD" id="1310556">
    <property type="gene designation" value="Ing3"/>
</dbReference>
<dbReference type="eggNOG" id="KOG1973">
    <property type="taxonomic scope" value="Eukaryota"/>
</dbReference>
<dbReference type="GeneTree" id="ENSGT00940000156619"/>
<dbReference type="HOGENOM" id="CLU_031900_0_0_1"/>
<dbReference type="InParanoid" id="Q498T3"/>
<dbReference type="OMA" id="YEWFHWK"/>
<dbReference type="OrthoDB" id="5411773at2759"/>
<dbReference type="PhylomeDB" id="Q498T3"/>
<dbReference type="TreeFam" id="TF106497"/>
<dbReference type="PRO" id="PR:Q498T3"/>
<dbReference type="Proteomes" id="UP000002494">
    <property type="component" value="Chromosome 4"/>
</dbReference>
<dbReference type="Proteomes" id="UP000234681">
    <property type="component" value="Chromosome 4"/>
</dbReference>
<dbReference type="Bgee" id="ENSRNOG00000005496">
    <property type="expression patterns" value="Expressed in thymus and 20 other cell types or tissues"/>
</dbReference>
<dbReference type="GO" id="GO:0035267">
    <property type="term" value="C:NuA4 histone acetyltransferase complex"/>
    <property type="evidence" value="ECO:0000250"/>
    <property type="project" value="UniProtKB"/>
</dbReference>
<dbReference type="GO" id="GO:0000786">
    <property type="term" value="C:nucleosome"/>
    <property type="evidence" value="ECO:0000266"/>
    <property type="project" value="RGD"/>
</dbReference>
<dbReference type="GO" id="GO:0032777">
    <property type="term" value="C:piccolo histone acetyltransferase complex"/>
    <property type="evidence" value="ECO:0000250"/>
    <property type="project" value="UniProtKB"/>
</dbReference>
<dbReference type="GO" id="GO:0000812">
    <property type="term" value="C:Swr1 complex"/>
    <property type="evidence" value="ECO:0000250"/>
    <property type="project" value="UniProtKB"/>
</dbReference>
<dbReference type="GO" id="GO:0043997">
    <property type="term" value="F:histone H4K12 acetyltransferase activity"/>
    <property type="evidence" value="ECO:0000266"/>
    <property type="project" value="RGD"/>
</dbReference>
<dbReference type="GO" id="GO:0046972">
    <property type="term" value="F:histone H4K16 acetyltransferase activity"/>
    <property type="evidence" value="ECO:0000266"/>
    <property type="project" value="RGD"/>
</dbReference>
<dbReference type="GO" id="GO:0043995">
    <property type="term" value="F:histone H4K5 acetyltransferase activity"/>
    <property type="evidence" value="ECO:0000266"/>
    <property type="project" value="RGD"/>
</dbReference>
<dbReference type="GO" id="GO:0043996">
    <property type="term" value="F:histone H4K8 acetyltransferase activity"/>
    <property type="evidence" value="ECO:0000266"/>
    <property type="project" value="RGD"/>
</dbReference>
<dbReference type="GO" id="GO:0035064">
    <property type="term" value="F:methylated histone binding"/>
    <property type="evidence" value="ECO:0000266"/>
    <property type="project" value="RGD"/>
</dbReference>
<dbReference type="GO" id="GO:0008270">
    <property type="term" value="F:zinc ion binding"/>
    <property type="evidence" value="ECO:0007669"/>
    <property type="project" value="UniProtKB-KW"/>
</dbReference>
<dbReference type="GO" id="GO:1905168">
    <property type="term" value="P:positive regulation of double-strand break repair via homologous recombination"/>
    <property type="evidence" value="ECO:0000266"/>
    <property type="project" value="RGD"/>
</dbReference>
<dbReference type="GO" id="GO:0051726">
    <property type="term" value="P:regulation of cell cycle"/>
    <property type="evidence" value="ECO:0000266"/>
    <property type="project" value="RGD"/>
</dbReference>
<dbReference type="CDD" id="cd16858">
    <property type="entry name" value="ING_ING3_Yng2p"/>
    <property type="match status" value="1"/>
</dbReference>
<dbReference type="CDD" id="cd15585">
    <property type="entry name" value="PHD_ING3"/>
    <property type="match status" value="1"/>
</dbReference>
<dbReference type="FunFam" id="3.30.40.10:FF:000103">
    <property type="entry name" value="Inhibitor of growth protein"/>
    <property type="match status" value="1"/>
</dbReference>
<dbReference type="Gene3D" id="6.10.140.1740">
    <property type="match status" value="1"/>
</dbReference>
<dbReference type="Gene3D" id="3.30.40.10">
    <property type="entry name" value="Zinc/RING finger domain, C3HC4 (zinc finger)"/>
    <property type="match status" value="1"/>
</dbReference>
<dbReference type="InterPro" id="IPR042020">
    <property type="entry name" value="ING3_PHD"/>
</dbReference>
<dbReference type="InterPro" id="IPR028651">
    <property type="entry name" value="ING_fam"/>
</dbReference>
<dbReference type="InterPro" id="IPR024610">
    <property type="entry name" value="ING_N_histone-binding"/>
</dbReference>
<dbReference type="InterPro" id="IPR019786">
    <property type="entry name" value="Zinc_finger_PHD-type_CS"/>
</dbReference>
<dbReference type="InterPro" id="IPR011011">
    <property type="entry name" value="Znf_FYVE_PHD"/>
</dbReference>
<dbReference type="InterPro" id="IPR001965">
    <property type="entry name" value="Znf_PHD"/>
</dbReference>
<dbReference type="InterPro" id="IPR019787">
    <property type="entry name" value="Znf_PHD-finger"/>
</dbReference>
<dbReference type="InterPro" id="IPR013083">
    <property type="entry name" value="Znf_RING/FYVE/PHD"/>
</dbReference>
<dbReference type="PANTHER" id="PTHR10333">
    <property type="entry name" value="INHIBITOR OF GROWTH PROTEIN"/>
    <property type="match status" value="1"/>
</dbReference>
<dbReference type="PANTHER" id="PTHR10333:SF103">
    <property type="entry name" value="INHIBITOR OF GROWTH PROTEIN 3"/>
    <property type="match status" value="1"/>
</dbReference>
<dbReference type="Pfam" id="PF12998">
    <property type="entry name" value="ING"/>
    <property type="match status" value="1"/>
</dbReference>
<dbReference type="SMART" id="SM01408">
    <property type="entry name" value="ING"/>
    <property type="match status" value="1"/>
</dbReference>
<dbReference type="SMART" id="SM00249">
    <property type="entry name" value="PHD"/>
    <property type="match status" value="1"/>
</dbReference>
<dbReference type="SUPFAM" id="SSF57903">
    <property type="entry name" value="FYVE/PHD zinc finger"/>
    <property type="match status" value="1"/>
</dbReference>
<dbReference type="PROSITE" id="PS01359">
    <property type="entry name" value="ZF_PHD_1"/>
    <property type="match status" value="1"/>
</dbReference>
<dbReference type="PROSITE" id="PS50016">
    <property type="entry name" value="ZF_PHD_2"/>
    <property type="match status" value="1"/>
</dbReference>
<accession>Q498T3</accession>
<feature type="chain" id="PRO_0000354692" description="Inhibitor of growth protein 3">
    <location>
        <begin position="1"/>
        <end position="421"/>
    </location>
</feature>
<feature type="zinc finger region" description="PHD-type" evidence="5">
    <location>
        <begin position="363"/>
        <end position="412"/>
    </location>
</feature>
<feature type="region of interest" description="Disordered" evidence="6">
    <location>
        <begin position="129"/>
        <end position="164"/>
    </location>
</feature>
<feature type="region of interest" description="Disordered" evidence="6">
    <location>
        <begin position="286"/>
        <end position="324"/>
    </location>
</feature>
<feature type="compositionally biased region" description="Low complexity" evidence="6">
    <location>
        <begin position="308"/>
        <end position="324"/>
    </location>
</feature>
<feature type="binding site" evidence="4">
    <location>
        <position position="366"/>
    </location>
    <ligand>
        <name>Zn(2+)</name>
        <dbReference type="ChEBI" id="CHEBI:29105"/>
        <label>1</label>
    </ligand>
</feature>
<feature type="binding site" evidence="4">
    <location>
        <position position="368"/>
    </location>
    <ligand>
        <name>Zn(2+)</name>
        <dbReference type="ChEBI" id="CHEBI:29105"/>
        <label>1</label>
    </ligand>
</feature>
<feature type="binding site" evidence="4">
    <location>
        <position position="379"/>
    </location>
    <ligand>
        <name>Zn(2+)</name>
        <dbReference type="ChEBI" id="CHEBI:29105"/>
        <label>2</label>
    </ligand>
</feature>
<feature type="binding site" evidence="4">
    <location>
        <position position="384"/>
    </location>
    <ligand>
        <name>Zn(2+)</name>
        <dbReference type="ChEBI" id="CHEBI:29105"/>
        <label>2</label>
    </ligand>
</feature>
<feature type="binding site" evidence="4">
    <location>
        <position position="390"/>
    </location>
    <ligand>
        <name>Zn(2+)</name>
        <dbReference type="ChEBI" id="CHEBI:29105"/>
        <label>1</label>
    </ligand>
</feature>
<feature type="binding site" evidence="4">
    <location>
        <position position="393"/>
    </location>
    <ligand>
        <name>Zn(2+)</name>
        <dbReference type="ChEBI" id="CHEBI:29105"/>
        <label>1</label>
    </ligand>
</feature>
<feature type="binding site" evidence="4">
    <location>
        <position position="406"/>
    </location>
    <ligand>
        <name>Zn(2+)</name>
        <dbReference type="ChEBI" id="CHEBI:29105"/>
        <label>2</label>
    </ligand>
</feature>
<feature type="binding site" evidence="4">
    <location>
        <position position="409"/>
    </location>
    <ligand>
        <name>Zn(2+)</name>
        <dbReference type="ChEBI" id="CHEBI:29105"/>
        <label>2</label>
    </ligand>
</feature>
<feature type="site" description="Histone H3K4me3 binding" evidence="4">
    <location>
        <position position="365"/>
    </location>
</feature>
<feature type="site" description="Histone H3K4me3 binding" evidence="4">
    <location>
        <position position="376"/>
    </location>
</feature>
<feature type="site" description="Histone H3K4me3 binding" evidence="4">
    <location>
        <position position="380"/>
    </location>
</feature>
<feature type="site" description="Histone H3K4me3 binding" evidence="4">
    <location>
        <position position="388"/>
    </location>
</feature>
<feature type="modified residue" description="N6-acetyllysine" evidence="2">
    <location>
        <position position="181"/>
    </location>
</feature>
<feature type="modified residue" description="N6-acetyllysine" evidence="3">
    <location>
        <position position="264"/>
    </location>
</feature>
<feature type="cross-link" description="Glycyl lysine isopeptide (Lys-Gly) (interchain with G-Cter in SUMO2)" evidence="3">
    <location>
        <position position="148"/>
    </location>
</feature>
<feature type="cross-link" description="Glycyl lysine isopeptide (Lys-Gly) (interchain with G-Cter in SUMO2)" evidence="3">
    <location>
        <position position="165"/>
    </location>
</feature>
<feature type="cross-link" description="Glycyl lysine isopeptide (Lys-Gly) (interchain with G-Cter in SUMO2)" evidence="3">
    <location>
        <position position="167"/>
    </location>
</feature>
<feature type="cross-link" description="Glycyl lysine isopeptide (Lys-Gly) (interchain with G-Cter in SUMO2)" evidence="3">
    <location>
        <position position="256"/>
    </location>
</feature>
<feature type="helix" evidence="8">
    <location>
        <begin position="2"/>
        <end position="12"/>
    </location>
</feature>
<feature type="helix" evidence="8">
    <location>
        <begin position="16"/>
        <end position="48"/>
    </location>
</feature>
<feature type="turn" evidence="8">
    <location>
        <begin position="49"/>
        <end position="52"/>
    </location>
</feature>
<feature type="helix" evidence="8">
    <location>
        <begin position="55"/>
        <end position="95"/>
    </location>
</feature>
<evidence type="ECO:0000250" key="1"/>
<evidence type="ECO:0000250" key="2">
    <source>
        <dbReference type="UniProtKB" id="Q8VEK6"/>
    </source>
</evidence>
<evidence type="ECO:0000250" key="3">
    <source>
        <dbReference type="UniProtKB" id="Q9NXR8"/>
    </source>
</evidence>
<evidence type="ECO:0000250" key="4">
    <source>
        <dbReference type="UniProtKB" id="Q9UK53"/>
    </source>
</evidence>
<evidence type="ECO:0000255" key="5">
    <source>
        <dbReference type="PROSITE-ProRule" id="PRU00146"/>
    </source>
</evidence>
<evidence type="ECO:0000256" key="6">
    <source>
        <dbReference type="SAM" id="MobiDB-lite"/>
    </source>
</evidence>
<evidence type="ECO:0000305" key="7"/>
<evidence type="ECO:0007829" key="8">
    <source>
        <dbReference type="PDB" id="8COK"/>
    </source>
</evidence>
<proteinExistence type="evidence at protein level"/>
<name>ING3_RAT</name>
<sequence length="421" mass="46925">MLYLEDYLEMIEQLPMDLRDRFTEMREMDLQVQNAMDQLEQRVSEFFMNAKKNKPEWREEQMASIKKDYYKALEDADEKVQLANQIYDLVDRHLRKLDQELAKFKMELEADNAGITEILERRSLELDAPSQPVNNHHAHSHTPVEKRKYNPTSHHTATDHIPEKKFKSEALLSTLTSDASKENTLGCRNNNSTASCNNAYNVNSSQPLASYNIGSLSSGAGAGAITMAAAQAVQATAQMKEGRRTSSLKASYEAFKNNDFQLGKEFSMPRETAGYSSSSALMTTLTQNASSSAADSRSGRKSKNNTKSSSQQSSSSSSSSSSSSLSLCSSSSTVVQEVSQQTTVVPESDSNSQVDWTYDPNEPRYCICNQVSYGEMVGCDNQDCPIEWFHYGCVGLTEAPKGKWFCPQCTAAMKRRGSRHK</sequence>
<protein>
    <recommendedName>
        <fullName>Inhibitor of growth protein 3</fullName>
    </recommendedName>
</protein>
<reference key="1">
    <citation type="submission" date="2005-07" db="EMBL/GenBank/DDBJ databases">
        <authorList>
            <person name="Mural R.J."/>
            <person name="Adams M.D."/>
            <person name="Myers E.W."/>
            <person name="Smith H.O."/>
            <person name="Venter J.C."/>
        </authorList>
    </citation>
    <scope>NUCLEOTIDE SEQUENCE [LARGE SCALE GENOMIC DNA]</scope>
</reference>
<reference key="2">
    <citation type="journal article" date="2004" name="Genome Res.">
        <title>The status, quality, and expansion of the NIH full-length cDNA project: the Mammalian Gene Collection (MGC).</title>
        <authorList>
            <consortium name="The MGC Project Team"/>
        </authorList>
    </citation>
    <scope>NUCLEOTIDE SEQUENCE [LARGE SCALE MRNA]</scope>
    <source>
        <tissue>Thymus</tissue>
    </source>
</reference>
<keyword id="KW-0002">3D-structure</keyword>
<keyword id="KW-0007">Acetylation</keyword>
<keyword id="KW-0156">Chromatin regulator</keyword>
<keyword id="KW-0341">Growth regulation</keyword>
<keyword id="KW-1017">Isopeptide bond</keyword>
<keyword id="KW-0479">Metal-binding</keyword>
<keyword id="KW-0539">Nucleus</keyword>
<keyword id="KW-1185">Reference proteome</keyword>
<keyword id="KW-0804">Transcription</keyword>
<keyword id="KW-0805">Transcription regulation</keyword>
<keyword id="KW-0832">Ubl conjugation</keyword>
<keyword id="KW-0862">Zinc</keyword>
<keyword id="KW-0863">Zinc-finger</keyword>